<organism>
    <name type="scientific">Chlamydia trachomatis serovar A (strain ATCC VR-571B / DSM 19440 / HAR-13)</name>
    <dbReference type="NCBI Taxonomy" id="315277"/>
    <lineage>
        <taxon>Bacteria</taxon>
        <taxon>Pseudomonadati</taxon>
        <taxon>Chlamydiota</taxon>
        <taxon>Chlamydiia</taxon>
        <taxon>Chlamydiales</taxon>
        <taxon>Chlamydiaceae</taxon>
        <taxon>Chlamydia/Chlamydophila group</taxon>
        <taxon>Chlamydia</taxon>
    </lineage>
</organism>
<sequence>MQTSRISSFFRGLVHLYRWAISPFLGAPCRFFPTCSEYALVALKKHPLRKSLFLIAKRLLKCGPWCIGGIDLVPRTSVEEYLSSPTPLAESPDDRTVPHTQETS</sequence>
<protein>
    <recommendedName>
        <fullName evidence="1">Putative membrane protein insertion efficiency factor</fullName>
    </recommendedName>
</protein>
<accession>Q3KLM5</accession>
<feature type="chain" id="PRO_0000253095" description="Putative membrane protein insertion efficiency factor">
    <location>
        <begin position="1"/>
        <end position="104"/>
    </location>
</feature>
<feature type="region of interest" description="Disordered" evidence="2">
    <location>
        <begin position="83"/>
        <end position="104"/>
    </location>
</feature>
<proteinExistence type="inferred from homology"/>
<comment type="function">
    <text evidence="1">Could be involved in insertion of integral membrane proteins into the membrane.</text>
</comment>
<comment type="subcellular location">
    <subcellularLocation>
        <location evidence="1">Cell inner membrane</location>
        <topology evidence="1">Peripheral membrane protein</topology>
        <orientation evidence="1">Cytoplasmic side</orientation>
    </subcellularLocation>
</comment>
<comment type="similarity">
    <text evidence="1">Belongs to the UPF0161 family.</text>
</comment>
<evidence type="ECO:0000255" key="1">
    <source>
        <dbReference type="HAMAP-Rule" id="MF_00386"/>
    </source>
</evidence>
<evidence type="ECO:0000256" key="2">
    <source>
        <dbReference type="SAM" id="MobiDB-lite"/>
    </source>
</evidence>
<keyword id="KW-0997">Cell inner membrane</keyword>
<keyword id="KW-1003">Cell membrane</keyword>
<keyword id="KW-0472">Membrane</keyword>
<reference key="1">
    <citation type="journal article" date="2005" name="Infect. Immun.">
        <title>Comparative genomic analysis of Chlamydia trachomatis oculotropic and genitotropic strains.</title>
        <authorList>
            <person name="Carlson J.H."/>
            <person name="Porcella S.F."/>
            <person name="McClarty G."/>
            <person name="Caldwell H.D."/>
        </authorList>
    </citation>
    <scope>NUCLEOTIDE SEQUENCE [LARGE SCALE GENOMIC DNA]</scope>
    <source>
        <strain>ATCC VR-571B / DSM 19440 / HAR-13</strain>
    </source>
</reference>
<name>YIDD_CHLTA</name>
<dbReference type="EMBL" id="CP000051">
    <property type="protein sequence ID" value="AAX50747.1"/>
    <property type="molecule type" value="Genomic_DNA"/>
</dbReference>
<dbReference type="KEGG" id="cta:CTA_0519"/>
<dbReference type="HOGENOM" id="CLU_144811_2_1_0"/>
<dbReference type="Proteomes" id="UP000002532">
    <property type="component" value="Chromosome"/>
</dbReference>
<dbReference type="GO" id="GO:0005886">
    <property type="term" value="C:plasma membrane"/>
    <property type="evidence" value="ECO:0007669"/>
    <property type="project" value="UniProtKB-SubCell"/>
</dbReference>
<dbReference type="HAMAP" id="MF_00386">
    <property type="entry name" value="UPF0161_YidD"/>
    <property type="match status" value="1"/>
</dbReference>
<dbReference type="InterPro" id="IPR002696">
    <property type="entry name" value="Membr_insert_effic_factor_YidD"/>
</dbReference>
<dbReference type="NCBIfam" id="TIGR00278">
    <property type="entry name" value="membrane protein insertion efficiency factor YidD"/>
    <property type="match status" value="1"/>
</dbReference>
<dbReference type="PANTHER" id="PTHR33383">
    <property type="entry name" value="MEMBRANE PROTEIN INSERTION EFFICIENCY FACTOR-RELATED"/>
    <property type="match status" value="1"/>
</dbReference>
<dbReference type="PANTHER" id="PTHR33383:SF1">
    <property type="entry name" value="MEMBRANE PROTEIN INSERTION EFFICIENCY FACTOR-RELATED"/>
    <property type="match status" value="1"/>
</dbReference>
<dbReference type="Pfam" id="PF01809">
    <property type="entry name" value="YidD"/>
    <property type="match status" value="1"/>
</dbReference>
<dbReference type="SMART" id="SM01234">
    <property type="entry name" value="Haemolytic"/>
    <property type="match status" value="1"/>
</dbReference>
<gene>
    <name type="ordered locus">CTA_0519</name>
</gene>